<dbReference type="EMBL" id="X03685">
    <property type="protein sequence ID" value="CAA27320.1"/>
    <property type="molecule type" value="Genomic_RNA"/>
</dbReference>
<dbReference type="PIR" id="A04184">
    <property type="entry name" value="WMBV2P"/>
</dbReference>
<dbReference type="InterPro" id="IPR028919">
    <property type="entry name" value="Viral_movement"/>
</dbReference>
<dbReference type="Pfam" id="PF01107">
    <property type="entry name" value="MP"/>
    <property type="match status" value="1"/>
</dbReference>
<accession>P69472</accession>
<accession>P05073</accession>
<proteinExistence type="predicted"/>
<reference key="1">
    <citation type="journal article" date="1986" name="Nucleic Acids Res.">
        <title>Analysis of the genome structure of tobacco rattle virus strain PSG.</title>
        <authorList>
            <person name="Cornelissen B.J.C."/>
            <person name="Linthorst H.J.M."/>
            <person name="Brederode F.T."/>
            <person name="Bol J.F."/>
        </authorList>
    </citation>
    <scope>NUCLEOTIDE SEQUENCE [GENOMIC RNA]</scope>
</reference>
<evidence type="ECO:0000256" key="1">
    <source>
        <dbReference type="SAM" id="MobiDB-lite"/>
    </source>
</evidence>
<organismHost>
    <name type="scientific">Beta vulgaris</name>
    <name type="common">Sugar beet</name>
    <dbReference type="NCBI Taxonomy" id="161934"/>
</organismHost>
<organismHost>
    <name type="scientific">Capsicum annuum</name>
    <name type="common">Capsicum pepper</name>
    <dbReference type="NCBI Taxonomy" id="4072"/>
</organismHost>
<organismHost>
    <name type="scientific">Hyacinthus</name>
    <dbReference type="NCBI Taxonomy" id="82024"/>
</organismHost>
<organismHost>
    <name type="scientific">Narcissus pseudonarcissus</name>
    <name type="common">Daffodil</name>
    <dbReference type="NCBI Taxonomy" id="39639"/>
</organismHost>
<organismHost>
    <name type="scientific">Nicotiana tabacum</name>
    <name type="common">Common tobacco</name>
    <dbReference type="NCBI Taxonomy" id="4097"/>
</organismHost>
<organismHost>
    <name type="scientific">Solanum tuberosum</name>
    <name type="common">Potato</name>
    <dbReference type="NCBI Taxonomy" id="4113"/>
</organismHost>
<organismHost>
    <name type="scientific">Spinacia oleracea</name>
    <name type="common">Spinach</name>
    <dbReference type="NCBI Taxonomy" id="3562"/>
</organismHost>
<organismHost>
    <name type="scientific">Stellaria media</name>
    <name type="common">Common chickweed</name>
    <name type="synonym">Alsine media</name>
    <dbReference type="NCBI Taxonomy" id="13274"/>
</organismHost>
<organismHost>
    <name type="scientific">Tulipa</name>
    <dbReference type="NCBI Taxonomy" id="13305"/>
</organismHost>
<organismHost>
    <name type="scientific">Viola arvensis</name>
    <name type="common">European field pansy</name>
    <name type="synonym">Field violet</name>
    <dbReference type="NCBI Taxonomy" id="97415"/>
</organismHost>
<sequence length="252" mass="28826">MEDKSLVTLKKKTFEVSKFSNLGAIELFVDGRRKRPKYFHRRRETVLNHVGGKKSEHKLDVFDQRDYKMIKSYAFLKIVGVQLVVTSHLPADTPGFIQIDLLDSRLTEKRKKGKTIQRFKARACDNCSVAQYKVEYSISTQENVLDVWKVGCISEGVPVCDGTYPFSIEVSLIWVATDSTRRLNVEELNSSDYIEGDFTDQEVFGEFMSLKQVEMKTIEAKYDGPYRPATTRPKSLLSSEDVKRASNKKNSS</sequence>
<name>V29K_TRVPS</name>
<organism>
    <name type="scientific">Tobacco rattle virus (strain PSG)</name>
    <dbReference type="NCBI Taxonomy" id="12297"/>
    <lineage>
        <taxon>Viruses</taxon>
        <taxon>Riboviria</taxon>
        <taxon>Orthornavirae</taxon>
        <taxon>Kitrinoviricota</taxon>
        <taxon>Alsuviricetes</taxon>
        <taxon>Martellivirales</taxon>
        <taxon>Virgaviridae</taxon>
        <taxon>Tobravirus</taxon>
        <taxon>Tobacco rattle virus</taxon>
    </lineage>
</organism>
<feature type="chain" id="PRO_0000222516" description="29 kDa protein">
    <location>
        <begin position="1"/>
        <end position="252"/>
    </location>
</feature>
<feature type="region of interest" description="Disordered" evidence="1">
    <location>
        <begin position="222"/>
        <end position="252"/>
    </location>
</feature>
<protein>
    <recommendedName>
        <fullName>29 kDa protein</fullName>
    </recommendedName>
</protein>